<keyword id="KW-0134">Cell wall</keyword>
<keyword id="KW-1185">Reference proteome</keyword>
<keyword id="KW-0964">Secreted</keyword>
<accession>Q01197</accession>
<comment type="subcellular location">
    <subcellularLocation>
        <location evidence="2">Secreted</location>
        <location evidence="2">Cell wall</location>
    </subcellularLocation>
</comment>
<comment type="tissue specificity">
    <text>It is predominantly expressed in fiber cells.</text>
</comment>
<comment type="developmental stage">
    <text>Concentration of E6 is highest during the late primary cell wall and early cell wall synthesis stages.</text>
</comment>
<comment type="caution">
    <text evidence="2">It is uncertain whether Met-1, Met-10 or Met-21 is the initiator.</text>
</comment>
<comment type="sequence caution" evidence="2">
    <conflict type="erroneous initiation">
        <sequence resource="EMBL-CDS" id="AAA33056"/>
    </conflict>
</comment>
<gene>
    <name type="primary">E6</name>
</gene>
<name>E6_GOSHI</name>
<sequence length="238" mass="28226">MASSPKLFSMSILFLFALFSMQIHAREYFSKFPRVNINEKETTTREQKHETFVPQTTQKPEEQEPRFIPETQNGYGLYGHESGSSRPSFTTKETYEPYVTPVRFHPDEPYNSIPESSNNKDTYYYNKNAYESTKQQNLGEAIFTEKGWSTKENQNNNYYNGNNGYNNGEKQGMSDTRYLENGKYYYDVKSENNYYPNRFDNSRGVASRNEFNENRYNNMGRYHQNQEEFEESEEEFEP</sequence>
<organism>
    <name type="scientific">Gossypium hirsutum</name>
    <name type="common">Upland cotton</name>
    <name type="synonym">Gossypium mexicanum</name>
    <dbReference type="NCBI Taxonomy" id="3635"/>
    <lineage>
        <taxon>Eukaryota</taxon>
        <taxon>Viridiplantae</taxon>
        <taxon>Streptophyta</taxon>
        <taxon>Embryophyta</taxon>
        <taxon>Tracheophyta</taxon>
        <taxon>Spermatophyta</taxon>
        <taxon>Magnoliopsida</taxon>
        <taxon>eudicotyledons</taxon>
        <taxon>Gunneridae</taxon>
        <taxon>Pentapetalae</taxon>
        <taxon>rosids</taxon>
        <taxon>malvids</taxon>
        <taxon>Malvales</taxon>
        <taxon>Malvaceae</taxon>
        <taxon>Malvoideae</taxon>
        <taxon>Gossypium</taxon>
    </lineage>
</organism>
<reference key="1">
    <citation type="journal article" date="1992" name="Proc. Natl. Acad. Sci. U.S.A.">
        <title>Gene expression in cotton (Gossypium hirsutum L.) fiber: cloning of the mRNAs.</title>
        <authorList>
            <person name="John M.E."/>
            <person name="Crow L.J."/>
        </authorList>
    </citation>
    <scope>NUCLEOTIDE SEQUENCE [MRNA]</scope>
    <source>
        <strain>cv. Coker 312</strain>
        <tissue>Fiber</tissue>
    </source>
</reference>
<reference key="2">
    <citation type="journal article" date="1996" name="Plant Mol. Biol.">
        <title>Structural characterization of genes corresponding to cotton fiber mRNA, E6: reduced E6 protein in transgenic plants by antisense gene.</title>
        <authorList>
            <person name="John M.E."/>
        </authorList>
    </citation>
    <scope>NUCLEOTIDE SEQUENCE [GENOMIC DNA / MRNA]</scope>
    <source>
        <strain>cv. Coker 312</strain>
    </source>
</reference>
<dbReference type="EMBL" id="M92051">
    <property type="protein sequence ID" value="AAA33055.1"/>
    <property type="molecule type" value="mRNA"/>
</dbReference>
<dbReference type="EMBL" id="M92051">
    <property type="protein sequence ID" value="AAA33056.1"/>
    <property type="status" value="ALT_INIT"/>
    <property type="molecule type" value="mRNA"/>
</dbReference>
<dbReference type="EMBL" id="U30505">
    <property type="protein sequence ID" value="AAB03079.1"/>
    <property type="molecule type" value="Genomic_DNA"/>
</dbReference>
<dbReference type="PIR" id="A46130">
    <property type="entry name" value="A46130"/>
</dbReference>
<dbReference type="STRING" id="3635.Q01197"/>
<dbReference type="PaxDb" id="3635-Q01197"/>
<dbReference type="Proteomes" id="UP000189702">
    <property type="component" value="Unplaced"/>
</dbReference>
<dbReference type="GO" id="GO:0005576">
    <property type="term" value="C:extracellular region"/>
    <property type="evidence" value="ECO:0007669"/>
    <property type="project" value="UniProtKB-KW"/>
</dbReference>
<dbReference type="GO" id="GO:0090378">
    <property type="term" value="P:seed trichome elongation"/>
    <property type="evidence" value="ECO:0000270"/>
    <property type="project" value="AgBase"/>
</dbReference>
<dbReference type="InterPro" id="IPR040290">
    <property type="entry name" value="Prot_E6-like"/>
</dbReference>
<dbReference type="PANTHER" id="PTHR35274">
    <property type="entry name" value="E6-LIKE PROTEIN"/>
    <property type="match status" value="1"/>
</dbReference>
<dbReference type="PANTHER" id="PTHR35274:SF2">
    <property type="entry name" value="E6-LIKE PROTEIN"/>
    <property type="match status" value="1"/>
</dbReference>
<feature type="chain" id="PRO_0000086886" description="Protein E6">
    <location>
        <begin position="1"/>
        <end position="238"/>
    </location>
</feature>
<feature type="region of interest" description="Disordered" evidence="1">
    <location>
        <begin position="40"/>
        <end position="64"/>
    </location>
</feature>
<feature type="region of interest" description="Disordered" evidence="1">
    <location>
        <begin position="210"/>
        <end position="238"/>
    </location>
</feature>
<feature type="compositionally biased region" description="Basic and acidic residues" evidence="1">
    <location>
        <begin position="40"/>
        <end position="51"/>
    </location>
</feature>
<feature type="compositionally biased region" description="Acidic residues" evidence="1">
    <location>
        <begin position="227"/>
        <end position="238"/>
    </location>
</feature>
<protein>
    <recommendedName>
        <fullName>Protein E6</fullName>
    </recommendedName>
</protein>
<proteinExistence type="evidence at transcript level"/>
<evidence type="ECO:0000256" key="1">
    <source>
        <dbReference type="SAM" id="MobiDB-lite"/>
    </source>
</evidence>
<evidence type="ECO:0000305" key="2"/>